<evidence type="ECO:0000250" key="1"/>
<evidence type="ECO:0000250" key="2">
    <source>
        <dbReference type="UniProtKB" id="Q7Z6B0"/>
    </source>
</evidence>
<evidence type="ECO:0000255" key="3"/>
<evidence type="ECO:0000256" key="4">
    <source>
        <dbReference type="SAM" id="MobiDB-lite"/>
    </source>
</evidence>
<evidence type="ECO:0007744" key="5">
    <source>
    </source>
</evidence>
<feature type="chain" id="PRO_0000087481" description="Coiled-coil domain-containing protein 91">
    <location>
        <begin position="1"/>
        <end position="442"/>
    </location>
</feature>
<feature type="region of interest" description="Disordered" evidence="4">
    <location>
        <begin position="1"/>
        <end position="27"/>
    </location>
</feature>
<feature type="region of interest" description="GGA1-binding motif">
    <location>
        <begin position="1"/>
        <end position="16"/>
    </location>
</feature>
<feature type="region of interest" description="Disordered" evidence="4">
    <location>
        <begin position="48"/>
        <end position="79"/>
    </location>
</feature>
<feature type="region of interest" description="Homodimerization" evidence="1">
    <location>
        <begin position="211"/>
        <end position="414"/>
    </location>
</feature>
<feature type="coiled-coil region" evidence="3">
    <location>
        <begin position="127"/>
        <end position="213"/>
    </location>
</feature>
<feature type="coiled-coil region" evidence="3">
    <location>
        <begin position="248"/>
        <end position="409"/>
    </location>
</feature>
<feature type="modified residue" description="Phosphoserine" evidence="5">
    <location>
        <position position="43"/>
    </location>
</feature>
<feature type="modified residue" description="Phosphoserine" evidence="5">
    <location>
        <position position="46"/>
    </location>
</feature>
<keyword id="KW-0175">Coiled coil</keyword>
<keyword id="KW-0333">Golgi apparatus</keyword>
<keyword id="KW-0472">Membrane</keyword>
<keyword id="KW-0597">Phosphoprotein</keyword>
<keyword id="KW-0653">Protein transport</keyword>
<keyword id="KW-1185">Reference proteome</keyword>
<keyword id="KW-0813">Transport</keyword>
<protein>
    <recommendedName>
        <fullName>Coiled-coil domain-containing protein 91</fullName>
    </recommendedName>
    <alternativeName>
        <fullName>GGA-binding partner</fullName>
    </alternativeName>
</protein>
<name>CCD91_RAT</name>
<gene>
    <name type="primary">Ccdc91</name>
    <name type="synonym">Ggabp</name>
</gene>
<comment type="function">
    <text evidence="2">Involved in the regulation of membrane traffic through the trans-Golgi network (TGN). Functions in close cooperation with the GGAs in the sorting of hydrolases to lysosomes.</text>
</comment>
<comment type="subunit">
    <text evidence="2">Homodimer. Interacts with GGA1, GGA2 and AP1G1.</text>
</comment>
<comment type="subcellular location">
    <subcellularLocation>
        <location evidence="2">Membrane</location>
        <topology evidence="2">Peripheral membrane protein</topology>
    </subcellularLocation>
    <subcellularLocation>
        <location evidence="2">Golgi apparatus</location>
        <location evidence="2">trans-Golgi network membrane</location>
        <topology evidence="2">Peripheral membrane protein</topology>
    </subcellularLocation>
    <subcellularLocation>
        <location evidence="2">Golgi apparatus</location>
        <location evidence="2">trans-Golgi network</location>
    </subcellularLocation>
    <text evidence="2">Colocalizes with GGA1, GGA2 and GGA3.</text>
</comment>
<reference key="1">
    <citation type="journal article" date="2004" name="Genome Res.">
        <title>The status, quality, and expansion of the NIH full-length cDNA project: the Mammalian Gene Collection (MGC).</title>
        <authorList>
            <consortium name="The MGC Project Team"/>
        </authorList>
    </citation>
    <scope>NUCLEOTIDE SEQUENCE [LARGE SCALE MRNA]</scope>
    <source>
        <tissue>Kidney</tissue>
    </source>
</reference>
<reference key="2">
    <citation type="journal article" date="2012" name="Nat. Commun.">
        <title>Quantitative maps of protein phosphorylation sites across 14 different rat organs and tissues.</title>
        <authorList>
            <person name="Lundby A."/>
            <person name="Secher A."/>
            <person name="Lage K."/>
            <person name="Nordsborg N.B."/>
            <person name="Dmytriyev A."/>
            <person name="Lundby C."/>
            <person name="Olsen J.V."/>
        </authorList>
    </citation>
    <scope>PHOSPHORYLATION [LARGE SCALE ANALYSIS] AT SER-43 AND SER-46</scope>
    <scope>IDENTIFICATION BY MASS SPECTROMETRY [LARGE SCALE ANALYSIS]</scope>
</reference>
<accession>Q6AY97</accession>
<organism>
    <name type="scientific">Rattus norvegicus</name>
    <name type="common">Rat</name>
    <dbReference type="NCBI Taxonomy" id="10116"/>
    <lineage>
        <taxon>Eukaryota</taxon>
        <taxon>Metazoa</taxon>
        <taxon>Chordata</taxon>
        <taxon>Craniata</taxon>
        <taxon>Vertebrata</taxon>
        <taxon>Euteleostomi</taxon>
        <taxon>Mammalia</taxon>
        <taxon>Eutheria</taxon>
        <taxon>Euarchontoglires</taxon>
        <taxon>Glires</taxon>
        <taxon>Rodentia</taxon>
        <taxon>Myomorpha</taxon>
        <taxon>Muroidea</taxon>
        <taxon>Muridae</taxon>
        <taxon>Murinae</taxon>
        <taxon>Rattus</taxon>
    </lineage>
</organism>
<dbReference type="EMBL" id="BC079135">
    <property type="protein sequence ID" value="AAH79135.1"/>
    <property type="molecule type" value="mRNA"/>
</dbReference>
<dbReference type="RefSeq" id="NP_001014083.1">
    <property type="nucleotide sequence ID" value="NM_001014061.1"/>
</dbReference>
<dbReference type="RefSeq" id="XP_008761678.1">
    <property type="nucleotide sequence ID" value="XM_008763456.4"/>
</dbReference>
<dbReference type="RefSeq" id="XP_063142260.1">
    <property type="nucleotide sequence ID" value="XM_063286190.1"/>
</dbReference>
<dbReference type="RefSeq" id="XP_063142262.1">
    <property type="nucleotide sequence ID" value="XM_063286192.1"/>
</dbReference>
<dbReference type="SMR" id="Q6AY97"/>
<dbReference type="FunCoup" id="Q6AY97">
    <property type="interactions" value="1021"/>
</dbReference>
<dbReference type="STRING" id="10116.ENSRNOP00000002527"/>
<dbReference type="iPTMnet" id="Q6AY97"/>
<dbReference type="PhosphoSitePlus" id="Q6AY97"/>
<dbReference type="jPOST" id="Q6AY97"/>
<dbReference type="PaxDb" id="10116-ENSRNOP00000002527"/>
<dbReference type="Ensembl" id="ENSRNOT00000002527.7">
    <property type="protein sequence ID" value="ENSRNOP00000002527.6"/>
    <property type="gene ID" value="ENSRNOG00000001847.7"/>
</dbReference>
<dbReference type="GeneID" id="312863"/>
<dbReference type="KEGG" id="rno:312863"/>
<dbReference type="UCSC" id="RGD:1359502">
    <property type="organism name" value="rat"/>
</dbReference>
<dbReference type="AGR" id="RGD:1359502"/>
<dbReference type="CTD" id="55297"/>
<dbReference type="RGD" id="1359502">
    <property type="gene designation" value="Ccdc91"/>
</dbReference>
<dbReference type="eggNOG" id="ENOG502QW5U">
    <property type="taxonomic scope" value="Eukaryota"/>
</dbReference>
<dbReference type="GeneTree" id="ENSGT00390000015899"/>
<dbReference type="HOGENOM" id="CLU_050535_1_0_1"/>
<dbReference type="InParanoid" id="Q6AY97"/>
<dbReference type="OMA" id="IQQSAHT"/>
<dbReference type="OrthoDB" id="56450at9989"/>
<dbReference type="PhylomeDB" id="Q6AY97"/>
<dbReference type="PRO" id="PR:Q6AY97"/>
<dbReference type="Proteomes" id="UP000002494">
    <property type="component" value="Chromosome 4"/>
</dbReference>
<dbReference type="Bgee" id="ENSRNOG00000001847">
    <property type="expression patterns" value="Expressed in testis and 19 other cell types or tissues"/>
</dbReference>
<dbReference type="GO" id="GO:0005829">
    <property type="term" value="C:cytosol"/>
    <property type="evidence" value="ECO:0007669"/>
    <property type="project" value="GOC"/>
</dbReference>
<dbReference type="GO" id="GO:0016020">
    <property type="term" value="C:membrane"/>
    <property type="evidence" value="ECO:0007669"/>
    <property type="project" value="UniProtKB-SubCell"/>
</dbReference>
<dbReference type="GO" id="GO:0005802">
    <property type="term" value="C:trans-Golgi network"/>
    <property type="evidence" value="ECO:0000250"/>
    <property type="project" value="UniProtKB"/>
</dbReference>
<dbReference type="GO" id="GO:0090160">
    <property type="term" value="P:Golgi to lysosome transport"/>
    <property type="evidence" value="ECO:0000250"/>
    <property type="project" value="UniProtKB"/>
</dbReference>
<dbReference type="GO" id="GO:0015031">
    <property type="term" value="P:protein transport"/>
    <property type="evidence" value="ECO:0007669"/>
    <property type="project" value="UniProtKB-KW"/>
</dbReference>
<dbReference type="InterPro" id="IPR034592">
    <property type="entry name" value="CCDC91"/>
</dbReference>
<dbReference type="PANTHER" id="PTHR35072">
    <property type="entry name" value="COILED-COIL DOMAIN-CONTAINING PROTEIN 91"/>
    <property type="match status" value="1"/>
</dbReference>
<dbReference type="PANTHER" id="PTHR35072:SF1">
    <property type="entry name" value="COILED-COIL DOMAIN-CONTAINING PROTEIN 91"/>
    <property type="match status" value="1"/>
</dbReference>
<sequence>MDDDDFGGFEAAETFDGEQGGNQAVSPAVPWATFPAVSGVRLSPASPELILDHDRSSPSSGHLRSDAVISSPDDTRADSSLVNQTISKVQLQQSAHTHLNIPLFPLGLTDESNHGALALEDEPEGPGVHVSNSQLRQKISSLETKLKASEEEKQRIKKDVESLMEKHSVLEKDFLKEKEQDAVSFQARYRELQEKHKQELEDMRKAGHEALSIIVDEYKALLQSSVKQQLDAIEKQYVSAIEKQAHRCEELLHAQHQRLLEVLDTEKELLKEKIQEALTQQSQEQKETLGKCLQEEMQKNKETLESAVKLEKEAMKDVITKAVEEERENLEKVHAEEREMWKTEHARDQERVAEAIQAAVQEQQRMSQEAVKAAIAEEQRRSEKAMEEAVKRTRDELVEYVREQRRLDQVTRQRSLSSLELFLSCAQKQLSALIATEPVDIE</sequence>
<proteinExistence type="evidence at protein level"/>